<gene>
    <name type="primary">KXD1</name>
    <name type="ORF">EC1118_1G1_2102g</name>
</gene>
<sequence length="218" mass="24442">MVTGISEENDDEETFSAVHSSTPSINSQSYAIPITEEMSSSFHDSISTTSNSSGSFDSDGSNVSDVVEQNEMDNESNVDEDLFLDNDIPQSSNLLPTDAQDPGPIFDVSRYIFDSLKQSIDSADFSEALSLQTKTSAVINSKSLELKQYIDEMKSRLTQLQEKFENGEATSKKIKRDLETSRKNIDYLNAALRVDFPIEFNQAREKILERRLNEDHDC</sequence>
<proteinExistence type="inferred from homology"/>
<name>KXD1_YEAS8</name>
<dbReference type="EMBL" id="FN393070">
    <property type="protein sequence ID" value="CAY79684.1"/>
    <property type="molecule type" value="Genomic_DNA"/>
</dbReference>
<dbReference type="SMR" id="C8Z8G8"/>
<dbReference type="HOGENOM" id="CLU_099155_0_0_1"/>
<dbReference type="OrthoDB" id="37059at4893"/>
<dbReference type="Proteomes" id="UP000000286">
    <property type="component" value="Chromosome VII, Scaffold EC1118_1G1"/>
</dbReference>
<dbReference type="GO" id="GO:0031083">
    <property type="term" value="C:BLOC-1 complex"/>
    <property type="evidence" value="ECO:0007669"/>
    <property type="project" value="TreeGrafter"/>
</dbReference>
<dbReference type="GO" id="GO:0005768">
    <property type="term" value="C:endosome"/>
    <property type="evidence" value="ECO:0007669"/>
    <property type="project" value="UniProtKB-SubCell"/>
</dbReference>
<dbReference type="GO" id="GO:0007032">
    <property type="term" value="P:endosome organization"/>
    <property type="evidence" value="ECO:0007669"/>
    <property type="project" value="TreeGrafter"/>
</dbReference>
<dbReference type="GO" id="GO:0032880">
    <property type="term" value="P:regulation of protein localization"/>
    <property type="evidence" value="ECO:0007669"/>
    <property type="project" value="TreeGrafter"/>
</dbReference>
<dbReference type="InterPro" id="IPR051390">
    <property type="entry name" value="BLOC-1_subunit_KXD1"/>
</dbReference>
<dbReference type="InterPro" id="IPR019371">
    <property type="entry name" value="KxDL_dom"/>
</dbReference>
<dbReference type="PANTHER" id="PTHR37787">
    <property type="entry name" value="BIOGENESIS OF LYSOSOME-RELATED ORGANELLES COMPLEX 1 SUBUNIT KXD1"/>
    <property type="match status" value="1"/>
</dbReference>
<dbReference type="PANTHER" id="PTHR37787:SF1">
    <property type="entry name" value="BIOGENESIS OF LYSOSOME-RELATED ORGANELLES COMPLEX 1 SUBUNIT KXD1"/>
    <property type="match status" value="1"/>
</dbReference>
<dbReference type="Pfam" id="PF10241">
    <property type="entry name" value="KxDL"/>
    <property type="match status" value="1"/>
</dbReference>
<evidence type="ECO:0000250" key="1"/>
<evidence type="ECO:0000255" key="2"/>
<evidence type="ECO:0000256" key="3">
    <source>
        <dbReference type="SAM" id="MobiDB-lite"/>
    </source>
</evidence>
<evidence type="ECO:0000305" key="4"/>
<reference key="1">
    <citation type="journal article" date="2009" name="Proc. Natl. Acad. Sci. U.S.A.">
        <title>Eukaryote-to-eukaryote gene transfer events revealed by the genome sequence of the wine yeast Saccharomyces cerevisiae EC1118.</title>
        <authorList>
            <person name="Novo M."/>
            <person name="Bigey F."/>
            <person name="Beyne E."/>
            <person name="Galeote V."/>
            <person name="Gavory F."/>
            <person name="Mallet S."/>
            <person name="Cambon B."/>
            <person name="Legras J.-L."/>
            <person name="Wincker P."/>
            <person name="Casaregola S."/>
            <person name="Dequin S."/>
        </authorList>
    </citation>
    <scope>NUCLEOTIDE SEQUENCE [LARGE SCALE GENOMIC DNA]</scope>
    <source>
        <strain>Lalvin EC1118 / Prise de mousse</strain>
    </source>
</reference>
<accession>C8Z8G8</accession>
<comment type="function">
    <text evidence="1">Component of the biogenesis of lysosome-related organelles complex-1 (BLOC-1) involved in endosomal cargo sorting.</text>
</comment>
<comment type="subunit">
    <text evidence="1">Component of the biogenesis of lysosome-related organelles complex-1 (BLOC-1) composed of at least BLI1, BLS1, CNL1, KXD1, SNN1 and VAB2.</text>
</comment>
<comment type="subcellular location">
    <subcellularLocation>
        <location evidence="1">Endosome</location>
    </subcellularLocation>
</comment>
<comment type="similarity">
    <text evidence="4">Belongs to the KXD1 family.</text>
</comment>
<organism>
    <name type="scientific">Saccharomyces cerevisiae (strain Lalvin EC1118 / Prise de mousse)</name>
    <name type="common">Baker's yeast</name>
    <dbReference type="NCBI Taxonomy" id="643680"/>
    <lineage>
        <taxon>Eukaryota</taxon>
        <taxon>Fungi</taxon>
        <taxon>Dikarya</taxon>
        <taxon>Ascomycota</taxon>
        <taxon>Saccharomycotina</taxon>
        <taxon>Saccharomycetes</taxon>
        <taxon>Saccharomycetales</taxon>
        <taxon>Saccharomycetaceae</taxon>
        <taxon>Saccharomyces</taxon>
    </lineage>
</organism>
<protein>
    <recommendedName>
        <fullName>Biogenesis of lysosome-related organelles complex 1 subunit KXD1</fullName>
        <shortName>BLOC-1 subunit KXD1</shortName>
    </recommendedName>
    <alternativeName>
        <fullName>KxDL homolog</fullName>
    </alternativeName>
</protein>
<feature type="chain" id="PRO_0000410673" description="Biogenesis of lysosome-related organelles complex 1 subunit KXD1">
    <location>
        <begin position="1"/>
        <end position="218"/>
    </location>
</feature>
<feature type="region of interest" description="Disordered" evidence="3">
    <location>
        <begin position="1"/>
        <end position="65"/>
    </location>
</feature>
<feature type="coiled-coil region" evidence="2">
    <location>
        <begin position="142"/>
        <end position="192"/>
    </location>
</feature>
<feature type="compositionally biased region" description="Polar residues" evidence="3">
    <location>
        <begin position="17"/>
        <end position="30"/>
    </location>
</feature>
<feature type="compositionally biased region" description="Low complexity" evidence="3">
    <location>
        <begin position="39"/>
        <end position="65"/>
    </location>
</feature>
<keyword id="KW-0175">Coiled coil</keyword>
<keyword id="KW-0967">Endosome</keyword>
<keyword id="KW-0813">Transport</keyword>